<sequence>MTPADLRQSPPLPPGGPTARTVLQLQGVGKRFPGVVALDGIDLDLRAGEVHAVCGENGAGKSTLMKIISGQYRADDGVVLYDGAPVQFSSATDAQAAGIAIIHQELNLVPHLSVAENIYLAREPKRGPFVDYRALNRAAQLCLQRIGLNVSPTTLVGALSIAQQQMVEIAKALSLDARVLIMDEPTSSLTESETVQLFRIIKELRSEGVAILYISHRLDEMAEIVDRVTVLRDGRHIATSDFASTSVNEIVARMVGRPLDDAYPPRRSTPTDQVLLKVRDLQRTGTFGPVSFELRKGEILGFAGLMGAGRTEVARAIFGAERPDAGSILLGDTPVEINSPREAIRHGIAYLSEDRKKDGLALAMPVAANITLANVAAISSRGFLRFADETAIAERYVRELGIRTPTVAQIARNLSGGNQQKIVISKWLYRGSRILFFDEPTRGIDVGAKYAIYGLMDRLAADGVGVGVVLISSELPELLGMTDRIAVFHEGRITAVLETGKTNQEEILHHASGRSHA</sequence>
<feature type="chain" id="PRO_0000277556" description="Putative ribose/galactose/methyl galactoside import ATP-binding protein 1">
    <location>
        <begin position="1"/>
        <end position="517"/>
    </location>
</feature>
<feature type="domain" description="ABC transporter 1" evidence="1">
    <location>
        <begin position="23"/>
        <end position="258"/>
    </location>
</feature>
<feature type="domain" description="ABC transporter 2" evidence="1">
    <location>
        <begin position="269"/>
        <end position="515"/>
    </location>
</feature>
<feature type="binding site" evidence="1">
    <location>
        <begin position="55"/>
        <end position="62"/>
    </location>
    <ligand>
        <name>ATP</name>
        <dbReference type="ChEBI" id="CHEBI:30616"/>
    </ligand>
</feature>
<protein>
    <recommendedName>
        <fullName evidence="1">Putative ribose/galactose/methyl galactoside import ATP-binding protein 1</fullName>
        <ecNumber evidence="1">7.5.2.11</ecNumber>
        <ecNumber evidence="1">7.5.2.7</ecNumber>
    </recommendedName>
</protein>
<evidence type="ECO:0000255" key="1">
    <source>
        <dbReference type="HAMAP-Rule" id="MF_01717"/>
    </source>
</evidence>
<keyword id="KW-0067">ATP-binding</keyword>
<keyword id="KW-0997">Cell inner membrane</keyword>
<keyword id="KW-1003">Cell membrane</keyword>
<keyword id="KW-0472">Membrane</keyword>
<keyword id="KW-0547">Nucleotide-binding</keyword>
<keyword id="KW-0677">Repeat</keyword>
<keyword id="KW-0762">Sugar transport</keyword>
<keyword id="KW-1278">Translocase</keyword>
<keyword id="KW-0813">Transport</keyword>
<proteinExistence type="inferred from homology"/>
<name>RGMG1_BURCM</name>
<gene>
    <name type="ordered locus">Bamb_1228</name>
</gene>
<accession>Q0BGD7</accession>
<organism>
    <name type="scientific">Burkholderia ambifaria (strain ATCC BAA-244 / DSM 16087 / CCUG 44356 / LMG 19182 / AMMD)</name>
    <name type="common">Burkholderia cepacia (strain AMMD)</name>
    <dbReference type="NCBI Taxonomy" id="339670"/>
    <lineage>
        <taxon>Bacteria</taxon>
        <taxon>Pseudomonadati</taxon>
        <taxon>Pseudomonadota</taxon>
        <taxon>Betaproteobacteria</taxon>
        <taxon>Burkholderiales</taxon>
        <taxon>Burkholderiaceae</taxon>
        <taxon>Burkholderia</taxon>
        <taxon>Burkholderia cepacia complex</taxon>
    </lineage>
</organism>
<reference key="1">
    <citation type="submission" date="2006-08" db="EMBL/GenBank/DDBJ databases">
        <title>Complete sequence of chromosome 1 of Burkholderia cepacia AMMD.</title>
        <authorList>
            <person name="Copeland A."/>
            <person name="Lucas S."/>
            <person name="Lapidus A."/>
            <person name="Barry K."/>
            <person name="Detter J.C."/>
            <person name="Glavina del Rio T."/>
            <person name="Hammon N."/>
            <person name="Israni S."/>
            <person name="Pitluck S."/>
            <person name="Bruce D."/>
            <person name="Chain P."/>
            <person name="Malfatti S."/>
            <person name="Shin M."/>
            <person name="Vergez L."/>
            <person name="Schmutz J."/>
            <person name="Larimer F."/>
            <person name="Land M."/>
            <person name="Hauser L."/>
            <person name="Kyrpides N."/>
            <person name="Kim E."/>
            <person name="Parke J."/>
            <person name="Coenye T."/>
            <person name="Konstantinidis K."/>
            <person name="Ramette A."/>
            <person name="Tiedje J."/>
            <person name="Richardson P."/>
        </authorList>
    </citation>
    <scope>NUCLEOTIDE SEQUENCE [LARGE SCALE GENOMIC DNA]</scope>
    <source>
        <strain>ATCC BAA-244 / DSM 16087 / CCUG 44356 / LMG 19182 / AMMD</strain>
    </source>
</reference>
<comment type="function">
    <text evidence="1">Part of an ABC transporter complex involved in carbohydrate import. Could be involved in ribose, galactose and/or methyl galactoside import. Responsible for energy coupling to the transport system.</text>
</comment>
<comment type="catalytic activity">
    <reaction evidence="1">
        <text>D-ribose(out) + ATP + H2O = D-ribose(in) + ADP + phosphate + H(+)</text>
        <dbReference type="Rhea" id="RHEA:29903"/>
        <dbReference type="ChEBI" id="CHEBI:15377"/>
        <dbReference type="ChEBI" id="CHEBI:15378"/>
        <dbReference type="ChEBI" id="CHEBI:30616"/>
        <dbReference type="ChEBI" id="CHEBI:43474"/>
        <dbReference type="ChEBI" id="CHEBI:47013"/>
        <dbReference type="ChEBI" id="CHEBI:456216"/>
        <dbReference type="EC" id="7.5.2.7"/>
    </reaction>
</comment>
<comment type="catalytic activity">
    <reaction evidence="1">
        <text>D-galactose(out) + ATP + H2O = D-galactose(in) + ADP + phosphate + H(+)</text>
        <dbReference type="Rhea" id="RHEA:60156"/>
        <dbReference type="ChEBI" id="CHEBI:4139"/>
        <dbReference type="ChEBI" id="CHEBI:15377"/>
        <dbReference type="ChEBI" id="CHEBI:15378"/>
        <dbReference type="ChEBI" id="CHEBI:30616"/>
        <dbReference type="ChEBI" id="CHEBI:43474"/>
        <dbReference type="ChEBI" id="CHEBI:456216"/>
        <dbReference type="EC" id="7.5.2.11"/>
    </reaction>
</comment>
<comment type="subcellular location">
    <subcellularLocation>
        <location evidence="1">Cell inner membrane</location>
        <topology evidence="1">Peripheral membrane protein</topology>
    </subcellularLocation>
</comment>
<comment type="similarity">
    <text evidence="1">Belongs to the ABC transporter superfamily. Carbohydrate importer 2 (CUT2) (TC 3.A.1.2) family.</text>
</comment>
<dbReference type="EC" id="7.5.2.11" evidence="1"/>
<dbReference type="EC" id="7.5.2.7" evidence="1"/>
<dbReference type="EMBL" id="CP000440">
    <property type="protein sequence ID" value="ABI86786.1"/>
    <property type="molecule type" value="Genomic_DNA"/>
</dbReference>
<dbReference type="RefSeq" id="WP_011656551.1">
    <property type="nucleotide sequence ID" value="NC_008390.1"/>
</dbReference>
<dbReference type="SMR" id="Q0BGD7"/>
<dbReference type="GeneID" id="93083370"/>
<dbReference type="KEGG" id="bam:Bamb_1228"/>
<dbReference type="PATRIC" id="fig|339670.21.peg.328"/>
<dbReference type="eggNOG" id="COG1129">
    <property type="taxonomic scope" value="Bacteria"/>
</dbReference>
<dbReference type="Proteomes" id="UP000000662">
    <property type="component" value="Chromosome 1"/>
</dbReference>
<dbReference type="GO" id="GO:0005886">
    <property type="term" value="C:plasma membrane"/>
    <property type="evidence" value="ECO:0007669"/>
    <property type="project" value="UniProtKB-SubCell"/>
</dbReference>
<dbReference type="GO" id="GO:0015611">
    <property type="term" value="F:ABC-type D-ribose transporter activity"/>
    <property type="evidence" value="ECO:0007669"/>
    <property type="project" value="UniProtKB-EC"/>
</dbReference>
<dbReference type="GO" id="GO:0005524">
    <property type="term" value="F:ATP binding"/>
    <property type="evidence" value="ECO:0007669"/>
    <property type="project" value="UniProtKB-KW"/>
</dbReference>
<dbReference type="GO" id="GO:0016887">
    <property type="term" value="F:ATP hydrolysis activity"/>
    <property type="evidence" value="ECO:0007669"/>
    <property type="project" value="InterPro"/>
</dbReference>
<dbReference type="CDD" id="cd03216">
    <property type="entry name" value="ABC_Carb_Monos_I"/>
    <property type="match status" value="1"/>
</dbReference>
<dbReference type="CDD" id="cd03215">
    <property type="entry name" value="ABC_Carb_Monos_II"/>
    <property type="match status" value="1"/>
</dbReference>
<dbReference type="FunFam" id="3.40.50.300:FF:000127">
    <property type="entry name" value="Ribose import ATP-binding protein RbsA"/>
    <property type="match status" value="1"/>
</dbReference>
<dbReference type="Gene3D" id="3.40.50.300">
    <property type="entry name" value="P-loop containing nucleotide triphosphate hydrolases"/>
    <property type="match status" value="2"/>
</dbReference>
<dbReference type="InterPro" id="IPR003593">
    <property type="entry name" value="AAA+_ATPase"/>
</dbReference>
<dbReference type="InterPro" id="IPR050107">
    <property type="entry name" value="ABC_carbohydrate_import_ATPase"/>
</dbReference>
<dbReference type="InterPro" id="IPR003439">
    <property type="entry name" value="ABC_transporter-like_ATP-bd"/>
</dbReference>
<dbReference type="InterPro" id="IPR017871">
    <property type="entry name" value="ABC_transporter-like_CS"/>
</dbReference>
<dbReference type="InterPro" id="IPR027417">
    <property type="entry name" value="P-loop_NTPase"/>
</dbReference>
<dbReference type="PANTHER" id="PTHR43790">
    <property type="entry name" value="CARBOHYDRATE TRANSPORT ATP-BINDING PROTEIN MG119-RELATED"/>
    <property type="match status" value="1"/>
</dbReference>
<dbReference type="PANTHER" id="PTHR43790:SF3">
    <property type="entry name" value="D-ALLOSE IMPORT ATP-BINDING PROTEIN ALSA-RELATED"/>
    <property type="match status" value="1"/>
</dbReference>
<dbReference type="Pfam" id="PF00005">
    <property type="entry name" value="ABC_tran"/>
    <property type="match status" value="2"/>
</dbReference>
<dbReference type="SMART" id="SM00382">
    <property type="entry name" value="AAA"/>
    <property type="match status" value="2"/>
</dbReference>
<dbReference type="SUPFAM" id="SSF52540">
    <property type="entry name" value="P-loop containing nucleoside triphosphate hydrolases"/>
    <property type="match status" value="2"/>
</dbReference>
<dbReference type="PROSITE" id="PS00211">
    <property type="entry name" value="ABC_TRANSPORTER_1"/>
    <property type="match status" value="1"/>
</dbReference>
<dbReference type="PROSITE" id="PS50893">
    <property type="entry name" value="ABC_TRANSPORTER_2"/>
    <property type="match status" value="2"/>
</dbReference>
<dbReference type="PROSITE" id="PS51260">
    <property type="entry name" value="MGLA"/>
    <property type="match status" value="1"/>
</dbReference>
<dbReference type="PROSITE" id="PS51254">
    <property type="entry name" value="RBSA"/>
    <property type="match status" value="1"/>
</dbReference>